<sequence>KVHGSLARAGKVRGQTPKVAKQEKKKKKTGRAKRRMQYNRRFVNVVPTFGKKKGPNANS</sequence>
<protein>
    <recommendedName>
        <fullName evidence="4">Small ribosomal subunit protein eS30</fullName>
    </recommendedName>
    <alternativeName>
        <fullName>40S ribosomal protein S30</fullName>
    </alternativeName>
</protein>
<proteinExistence type="inferred from homology"/>
<dbReference type="EMBL" id="CR858470">
    <property type="protein sequence ID" value="CAH90698.1"/>
    <property type="status" value="ALT_INIT"/>
    <property type="molecule type" value="mRNA"/>
</dbReference>
<dbReference type="SMR" id="P0C2F0"/>
<dbReference type="HOGENOM" id="CLU_010412_5_0_1"/>
<dbReference type="InParanoid" id="P0C2F0"/>
<dbReference type="Proteomes" id="UP000001595">
    <property type="component" value="Unplaced"/>
</dbReference>
<dbReference type="GO" id="GO:0022627">
    <property type="term" value="C:cytosolic small ribosomal subunit"/>
    <property type="evidence" value="ECO:0007669"/>
    <property type="project" value="TreeGrafter"/>
</dbReference>
<dbReference type="GO" id="GO:0003735">
    <property type="term" value="F:structural constituent of ribosome"/>
    <property type="evidence" value="ECO:0007669"/>
    <property type="project" value="InterPro"/>
</dbReference>
<dbReference type="GO" id="GO:0006412">
    <property type="term" value="P:translation"/>
    <property type="evidence" value="ECO:0007669"/>
    <property type="project" value="InterPro"/>
</dbReference>
<dbReference type="InterPro" id="IPR006846">
    <property type="entry name" value="Ribosomal_eS30"/>
</dbReference>
<dbReference type="PANTHER" id="PTHR12650">
    <property type="entry name" value="40S RIBOSOMAL PROTEIN S30/UBIQUITIN-LIKE PROTEIN FUBI"/>
    <property type="match status" value="1"/>
</dbReference>
<dbReference type="PANTHER" id="PTHR12650:SF15">
    <property type="entry name" value="RIBOSOMAL PROTEIN S30, ISOFORM A"/>
    <property type="match status" value="1"/>
</dbReference>
<dbReference type="Pfam" id="PF04758">
    <property type="entry name" value="Ribosomal_S30"/>
    <property type="match status" value="1"/>
</dbReference>
<name>RS30_PONAB</name>
<comment type="miscellaneous">
    <text evidence="1">This ribosomal protein is synthesized as a C-terminal extension protein (CEP) of a ubiquitin-like protein.</text>
</comment>
<comment type="similarity">
    <text evidence="4">Belongs to the eukaryotic ribosomal protein eS30 family.</text>
</comment>
<comment type="sequence caution" evidence="4">
    <conflict type="erroneous initiation">
        <sequence resource="EMBL-CDS" id="CAH90698"/>
    </conflict>
</comment>
<feature type="chain" id="PRO_0000273966" description="Small ribosomal subunit protein eS30">
    <location>
        <begin position="1"/>
        <end position="59"/>
    </location>
</feature>
<feature type="region of interest" description="Disordered" evidence="3">
    <location>
        <begin position="1"/>
        <end position="35"/>
    </location>
</feature>
<feature type="compositionally biased region" description="Basic residues" evidence="3">
    <location>
        <begin position="23"/>
        <end position="35"/>
    </location>
</feature>
<feature type="modified residue" description="N6-succinyllysine" evidence="2">
    <location>
        <position position="51"/>
    </location>
</feature>
<organism>
    <name type="scientific">Pongo abelii</name>
    <name type="common">Sumatran orangutan</name>
    <name type="synonym">Pongo pygmaeus abelii</name>
    <dbReference type="NCBI Taxonomy" id="9601"/>
    <lineage>
        <taxon>Eukaryota</taxon>
        <taxon>Metazoa</taxon>
        <taxon>Chordata</taxon>
        <taxon>Craniata</taxon>
        <taxon>Vertebrata</taxon>
        <taxon>Euteleostomi</taxon>
        <taxon>Mammalia</taxon>
        <taxon>Eutheria</taxon>
        <taxon>Euarchontoglires</taxon>
        <taxon>Primates</taxon>
        <taxon>Haplorrhini</taxon>
        <taxon>Catarrhini</taxon>
        <taxon>Hominidae</taxon>
        <taxon>Pongo</taxon>
    </lineage>
</organism>
<keyword id="KW-1185">Reference proteome</keyword>
<keyword id="KW-0687">Ribonucleoprotein</keyword>
<keyword id="KW-0689">Ribosomal protein</keyword>
<evidence type="ECO:0000250" key="1"/>
<evidence type="ECO:0000250" key="2">
    <source>
        <dbReference type="UniProtKB" id="P62862"/>
    </source>
</evidence>
<evidence type="ECO:0000256" key="3">
    <source>
        <dbReference type="SAM" id="MobiDB-lite"/>
    </source>
</evidence>
<evidence type="ECO:0000305" key="4"/>
<accession>P0C2F0</accession>
<accession>Q5RC12</accession>
<reference key="1">
    <citation type="submission" date="2004-11" db="EMBL/GenBank/DDBJ databases">
        <authorList>
            <consortium name="The German cDNA consortium"/>
        </authorList>
    </citation>
    <scope>NUCLEOTIDE SEQUENCE [LARGE SCALE MRNA]</scope>
    <source>
        <tissue>Heart</tissue>
    </source>
</reference>
<gene>
    <name type="primary">FAU</name>
</gene>